<keyword id="KW-1003">Cell membrane</keyword>
<keyword id="KW-0472">Membrane</keyword>
<keyword id="KW-1185">Reference proteome</keyword>
<keyword id="KW-0812">Transmembrane</keyword>
<keyword id="KW-1133">Transmembrane helix</keyword>
<proteinExistence type="predicted"/>
<protein>
    <recommendedName>
        <fullName>Uncharacterized protein YaiZ</fullName>
    </recommendedName>
</protein>
<reference key="1">
    <citation type="submission" date="1997-01" db="EMBL/GenBank/DDBJ databases">
        <title>Sequence of minutes 4-25 of Escherichia coli.</title>
        <authorList>
            <person name="Chung E."/>
            <person name="Allen E."/>
            <person name="Araujo R."/>
            <person name="Aparicio A.M."/>
            <person name="Davis K."/>
            <person name="Duncan M."/>
            <person name="Federspiel N."/>
            <person name="Hyman R."/>
            <person name="Kalman S."/>
            <person name="Komp C."/>
            <person name="Kurdi O."/>
            <person name="Lew H."/>
            <person name="Lin D."/>
            <person name="Namath A."/>
            <person name="Oefner P."/>
            <person name="Roberts D."/>
            <person name="Schramm S."/>
            <person name="Davis R.W."/>
        </authorList>
    </citation>
    <scope>NUCLEOTIDE SEQUENCE [LARGE SCALE GENOMIC DNA]</scope>
    <source>
        <strain>K12 / MG1655 / ATCC 47076</strain>
    </source>
</reference>
<reference key="2">
    <citation type="journal article" date="1997" name="Science">
        <title>The complete genome sequence of Escherichia coli K-12.</title>
        <authorList>
            <person name="Blattner F.R."/>
            <person name="Plunkett G. III"/>
            <person name="Bloch C.A."/>
            <person name="Perna N.T."/>
            <person name="Burland V."/>
            <person name="Riley M."/>
            <person name="Collado-Vides J."/>
            <person name="Glasner J.D."/>
            <person name="Rode C.K."/>
            <person name="Mayhew G.F."/>
            <person name="Gregor J."/>
            <person name="Davis N.W."/>
            <person name="Kirkpatrick H.A."/>
            <person name="Goeden M.A."/>
            <person name="Rose D.J."/>
            <person name="Mau B."/>
            <person name="Shao Y."/>
        </authorList>
    </citation>
    <scope>NUCLEOTIDE SEQUENCE [LARGE SCALE GENOMIC DNA]</scope>
    <source>
        <strain>K12 / MG1655 / ATCC 47076</strain>
    </source>
</reference>
<reference key="3">
    <citation type="journal article" date="2006" name="Mol. Syst. Biol.">
        <title>Highly accurate genome sequences of Escherichia coli K-12 strains MG1655 and W3110.</title>
        <authorList>
            <person name="Hayashi K."/>
            <person name="Morooka N."/>
            <person name="Yamamoto Y."/>
            <person name="Fujita K."/>
            <person name="Isono K."/>
            <person name="Choi S."/>
            <person name="Ohtsubo E."/>
            <person name="Baba T."/>
            <person name="Wanner B.L."/>
            <person name="Mori H."/>
            <person name="Horiuchi T."/>
        </authorList>
    </citation>
    <scope>NUCLEOTIDE SEQUENCE [LARGE SCALE GENOMIC DNA]</scope>
    <source>
        <strain>K12 / W3110 / ATCC 27325 / DSM 5911</strain>
    </source>
</reference>
<feature type="chain" id="PRO_0000168602" description="Uncharacterized protein YaiZ">
    <location>
        <begin position="1"/>
        <end position="70"/>
    </location>
</feature>
<feature type="transmembrane region" description="Helical" evidence="1">
    <location>
        <begin position="13"/>
        <end position="33"/>
    </location>
</feature>
<feature type="transmembrane region" description="Helical" evidence="1">
    <location>
        <begin position="39"/>
        <end position="59"/>
    </location>
</feature>
<organism>
    <name type="scientific">Escherichia coli (strain K12)</name>
    <dbReference type="NCBI Taxonomy" id="83333"/>
    <lineage>
        <taxon>Bacteria</taxon>
        <taxon>Pseudomonadati</taxon>
        <taxon>Pseudomonadota</taxon>
        <taxon>Gammaproteobacteria</taxon>
        <taxon>Enterobacterales</taxon>
        <taxon>Enterobacteriaceae</taxon>
        <taxon>Escherichia</taxon>
    </lineage>
</organism>
<dbReference type="EMBL" id="U73857">
    <property type="protein sequence ID" value="AAB18103.1"/>
    <property type="status" value="ALT_INIT"/>
    <property type="molecule type" value="Genomic_DNA"/>
</dbReference>
<dbReference type="EMBL" id="U00096">
    <property type="protein sequence ID" value="AAC73483.2"/>
    <property type="molecule type" value="Genomic_DNA"/>
</dbReference>
<dbReference type="EMBL" id="AP009048">
    <property type="protein sequence ID" value="BAE76161.1"/>
    <property type="molecule type" value="Genomic_DNA"/>
</dbReference>
<dbReference type="PIR" id="D64766">
    <property type="entry name" value="D64766"/>
</dbReference>
<dbReference type="RefSeq" id="NP_414914.2">
    <property type="nucleotide sequence ID" value="NC_000913.3"/>
</dbReference>
<dbReference type="RefSeq" id="WP_001295334.1">
    <property type="nucleotide sequence ID" value="NZ_STEB01000007.1"/>
</dbReference>
<dbReference type="SMR" id="P0AAQ0"/>
<dbReference type="BioGRID" id="4259826">
    <property type="interactions" value="3"/>
</dbReference>
<dbReference type="FunCoup" id="P0AAQ0">
    <property type="interactions" value="159"/>
</dbReference>
<dbReference type="STRING" id="511145.b0380"/>
<dbReference type="TCDB" id="9.B.382.1.1">
    <property type="family name" value="the duf2754 domain or yaiz (duf2754) family"/>
</dbReference>
<dbReference type="PaxDb" id="511145-b0380"/>
<dbReference type="EnsemblBacteria" id="AAC73483">
    <property type="protein sequence ID" value="AAC73483"/>
    <property type="gene ID" value="b0380"/>
</dbReference>
<dbReference type="GeneID" id="947355"/>
<dbReference type="KEGG" id="ecj:JW5053"/>
<dbReference type="KEGG" id="eco:b0380"/>
<dbReference type="KEGG" id="ecoc:C3026_01835"/>
<dbReference type="PATRIC" id="fig|1411691.4.peg.1898"/>
<dbReference type="EchoBASE" id="EB4028"/>
<dbReference type="eggNOG" id="ENOG5032T5P">
    <property type="taxonomic scope" value="Bacteria"/>
</dbReference>
<dbReference type="HOGENOM" id="CLU_2600729_0_0_6"/>
<dbReference type="InParanoid" id="P0AAQ0"/>
<dbReference type="OMA" id="LIFIMNG"/>
<dbReference type="OrthoDB" id="6563899at2"/>
<dbReference type="PhylomeDB" id="P0AAQ0"/>
<dbReference type="BioCyc" id="EcoCyc:G6229-MONOMER"/>
<dbReference type="PRO" id="PR:P0AAQ0"/>
<dbReference type="Proteomes" id="UP000000625">
    <property type="component" value="Chromosome"/>
</dbReference>
<dbReference type="GO" id="GO:0005886">
    <property type="term" value="C:plasma membrane"/>
    <property type="evidence" value="ECO:0000314"/>
    <property type="project" value="EcoCyc"/>
</dbReference>
<dbReference type="InterPro" id="IPR020490">
    <property type="entry name" value="Uncharacterised_YaiZ"/>
</dbReference>
<dbReference type="Pfam" id="PF10953">
    <property type="entry name" value="DUF2754"/>
    <property type="match status" value="1"/>
</dbReference>
<gene>
    <name type="primary">yaiZ</name>
    <name type="ordered locus">b0380</name>
    <name type="ordered locus">JW5053</name>
</gene>
<accession>P0AAQ0</accession>
<accession>P77273</accession>
<accession>Q2MC45</accession>
<name>YAIZ_ECOLI</name>
<sequence>MNLPVKIRRDWHYYAFAIGLIFILNGVVGLLGFEAKGWQTYAVGLVTWVISFWLAGLIIRRRDEETENAQ</sequence>
<comment type="subcellular location">
    <subcellularLocation>
        <location evidence="2">Cell membrane</location>
        <topology evidence="2">Multi-pass membrane protein</topology>
    </subcellularLocation>
</comment>
<comment type="sequence caution" evidence="2">
    <conflict type="erroneous initiation">
        <sequence resource="EMBL-CDS" id="AAB18103"/>
    </conflict>
    <text>Extended N-terminus.</text>
</comment>
<evidence type="ECO:0000255" key="1"/>
<evidence type="ECO:0000305" key="2"/>